<gene>
    <name evidence="1" type="primary">nrfA</name>
    <name type="ordered locus">SSON_4251</name>
</gene>
<reference key="1">
    <citation type="journal article" date="2005" name="Nucleic Acids Res.">
        <title>Genome dynamics and diversity of Shigella species, the etiologic agents of bacillary dysentery.</title>
        <authorList>
            <person name="Yang F."/>
            <person name="Yang J."/>
            <person name="Zhang X."/>
            <person name="Chen L."/>
            <person name="Jiang Y."/>
            <person name="Yan Y."/>
            <person name="Tang X."/>
            <person name="Wang J."/>
            <person name="Xiong Z."/>
            <person name="Dong J."/>
            <person name="Xue Y."/>
            <person name="Zhu Y."/>
            <person name="Xu X."/>
            <person name="Sun L."/>
            <person name="Chen S."/>
            <person name="Nie H."/>
            <person name="Peng J."/>
            <person name="Xu J."/>
            <person name="Wang Y."/>
            <person name="Yuan Z."/>
            <person name="Wen Y."/>
            <person name="Yao Z."/>
            <person name="Shen Y."/>
            <person name="Qiang B."/>
            <person name="Hou Y."/>
            <person name="Yu J."/>
            <person name="Jin Q."/>
        </authorList>
    </citation>
    <scope>NUCLEOTIDE SEQUENCE [LARGE SCALE GENOMIC DNA]</scope>
    <source>
        <strain>Ss046</strain>
    </source>
</reference>
<comment type="function">
    <text evidence="1">Catalyzes the reduction of nitrite to ammonia, consuming six electrons in the process.</text>
</comment>
<comment type="catalytic activity">
    <reaction evidence="1">
        <text>6 Fe(III)-[cytochrome c] + NH4(+) + 2 H2O = 6 Fe(II)-[cytochrome c] + nitrite + 8 H(+)</text>
        <dbReference type="Rhea" id="RHEA:13089"/>
        <dbReference type="Rhea" id="RHEA-COMP:10350"/>
        <dbReference type="Rhea" id="RHEA-COMP:14399"/>
        <dbReference type="ChEBI" id="CHEBI:15377"/>
        <dbReference type="ChEBI" id="CHEBI:15378"/>
        <dbReference type="ChEBI" id="CHEBI:16301"/>
        <dbReference type="ChEBI" id="CHEBI:28938"/>
        <dbReference type="ChEBI" id="CHEBI:29033"/>
        <dbReference type="ChEBI" id="CHEBI:29034"/>
        <dbReference type="EC" id="1.7.2.2"/>
    </reaction>
</comment>
<comment type="cofactor">
    <cofactor evidence="1">
        <name>Ca(2+)</name>
        <dbReference type="ChEBI" id="CHEBI:29108"/>
    </cofactor>
    <text evidence="1">Binds 1 Ca(2+) ion per monomer.</text>
</comment>
<comment type="cofactor">
    <cofactor evidence="1">
        <name>heme c</name>
        <dbReference type="ChEBI" id="CHEBI:61717"/>
    </cofactor>
    <text evidence="1">Binds 5 heme c groups covalently per monomer.</text>
</comment>
<comment type="pathway">
    <text evidence="1">Nitrogen metabolism; nitrate reduction (assimilation).</text>
</comment>
<comment type="subcellular location">
    <subcellularLocation>
        <location evidence="1">Periplasm</location>
    </subcellularLocation>
</comment>
<comment type="similarity">
    <text evidence="1">Belongs to the cytochrome c-552 family.</text>
</comment>
<proteinExistence type="inferred from homology"/>
<dbReference type="EC" id="1.7.2.2" evidence="1"/>
<dbReference type="EMBL" id="CP000038">
    <property type="protein sequence ID" value="AAZ90747.1"/>
    <property type="molecule type" value="Genomic_DNA"/>
</dbReference>
<dbReference type="RefSeq" id="WP_000196875.1">
    <property type="nucleotide sequence ID" value="NC_007384.1"/>
</dbReference>
<dbReference type="SMR" id="Q3YUR5"/>
<dbReference type="GeneID" id="93777759"/>
<dbReference type="KEGG" id="ssn:SSON_4251"/>
<dbReference type="HOGENOM" id="CLU_035040_1_0_6"/>
<dbReference type="UniPathway" id="UPA00653"/>
<dbReference type="Proteomes" id="UP000002529">
    <property type="component" value="Chromosome"/>
</dbReference>
<dbReference type="GO" id="GO:0030288">
    <property type="term" value="C:outer membrane-bounded periplasmic space"/>
    <property type="evidence" value="ECO:0007669"/>
    <property type="project" value="TreeGrafter"/>
</dbReference>
<dbReference type="GO" id="GO:0005509">
    <property type="term" value="F:calcium ion binding"/>
    <property type="evidence" value="ECO:0007669"/>
    <property type="project" value="UniProtKB-UniRule"/>
</dbReference>
<dbReference type="GO" id="GO:0020037">
    <property type="term" value="F:heme binding"/>
    <property type="evidence" value="ECO:0007669"/>
    <property type="project" value="InterPro"/>
</dbReference>
<dbReference type="GO" id="GO:0005506">
    <property type="term" value="F:iron ion binding"/>
    <property type="evidence" value="ECO:0007669"/>
    <property type="project" value="UniProtKB-UniRule"/>
</dbReference>
<dbReference type="GO" id="GO:0042279">
    <property type="term" value="F:nitrite reductase (cytochrome, ammonia-forming) activity"/>
    <property type="evidence" value="ECO:0007669"/>
    <property type="project" value="UniProtKB-UniRule"/>
</dbReference>
<dbReference type="GO" id="GO:0019645">
    <property type="term" value="P:anaerobic electron transport chain"/>
    <property type="evidence" value="ECO:0007669"/>
    <property type="project" value="TreeGrafter"/>
</dbReference>
<dbReference type="GO" id="GO:0042128">
    <property type="term" value="P:nitrate assimilation"/>
    <property type="evidence" value="ECO:0007669"/>
    <property type="project" value="UniProtKB-UniRule"/>
</dbReference>
<dbReference type="CDD" id="cd00548">
    <property type="entry name" value="NrfA-like"/>
    <property type="match status" value="1"/>
</dbReference>
<dbReference type="FunFam" id="1.10.1130.10:FF:000002">
    <property type="entry name" value="Cytochrome c-552"/>
    <property type="match status" value="1"/>
</dbReference>
<dbReference type="FunFam" id="1.20.140.10:FF:000014">
    <property type="entry name" value="Cytochrome c-552"/>
    <property type="match status" value="1"/>
</dbReference>
<dbReference type="Gene3D" id="1.20.140.10">
    <property type="entry name" value="Butyryl-CoA Dehydrogenase, subunit A, domain 3"/>
    <property type="match status" value="1"/>
</dbReference>
<dbReference type="Gene3D" id="1.10.1130.10">
    <property type="entry name" value="Flavocytochrome C3, Chain A"/>
    <property type="match status" value="1"/>
</dbReference>
<dbReference type="HAMAP" id="MF_01182">
    <property type="entry name" value="Cytochrom_C552"/>
    <property type="match status" value="1"/>
</dbReference>
<dbReference type="InterPro" id="IPR003321">
    <property type="entry name" value="Cyt_c552"/>
</dbReference>
<dbReference type="InterPro" id="IPR017570">
    <property type="entry name" value="Cyt_c_NO2Rdtase_formate-dep"/>
</dbReference>
<dbReference type="InterPro" id="IPR036280">
    <property type="entry name" value="Multihaem_cyt_sf"/>
</dbReference>
<dbReference type="NCBIfam" id="TIGR03152">
    <property type="entry name" value="cyto_c552_HCOOH"/>
    <property type="match status" value="1"/>
</dbReference>
<dbReference type="NCBIfam" id="NF008339">
    <property type="entry name" value="PRK11125.1"/>
    <property type="match status" value="1"/>
</dbReference>
<dbReference type="PANTHER" id="PTHR30633:SF0">
    <property type="entry name" value="CYTOCHROME C-552"/>
    <property type="match status" value="1"/>
</dbReference>
<dbReference type="PANTHER" id="PTHR30633">
    <property type="entry name" value="CYTOCHROME C-552 RESPIRATORY NITRITE REDUCTASE"/>
    <property type="match status" value="1"/>
</dbReference>
<dbReference type="Pfam" id="PF02335">
    <property type="entry name" value="Cytochrom_C552"/>
    <property type="match status" value="1"/>
</dbReference>
<dbReference type="PIRSF" id="PIRSF000243">
    <property type="entry name" value="Cyt_c552"/>
    <property type="match status" value="1"/>
</dbReference>
<dbReference type="SUPFAM" id="SSF48695">
    <property type="entry name" value="Multiheme cytochromes"/>
    <property type="match status" value="1"/>
</dbReference>
<dbReference type="PROSITE" id="PS51008">
    <property type="entry name" value="MULTIHEME_CYTC"/>
    <property type="match status" value="1"/>
</dbReference>
<feature type="signal peptide" evidence="1">
    <location>
        <begin position="1"/>
        <end position="26"/>
    </location>
</feature>
<feature type="chain" id="PRO_0000268980" description="Cytochrome c-552">
    <location>
        <begin position="27"/>
        <end position="478"/>
    </location>
</feature>
<feature type="binding site" description="axial binding residue" evidence="1">
    <location>
        <position position="94"/>
    </location>
    <ligand>
        <name>heme c</name>
        <dbReference type="ChEBI" id="CHEBI:61717"/>
        <label>3</label>
    </ligand>
    <ligandPart>
        <name>Fe</name>
        <dbReference type="ChEBI" id="CHEBI:18248"/>
    </ligandPart>
</feature>
<feature type="binding site" description="covalent" evidence="1">
    <location>
        <position position="122"/>
    </location>
    <ligand>
        <name>heme</name>
        <dbReference type="ChEBI" id="CHEBI:30413"/>
        <label>1</label>
    </ligand>
</feature>
<feature type="binding site" description="covalent" evidence="1">
    <location>
        <position position="125"/>
    </location>
    <ligand>
        <name>heme</name>
        <dbReference type="ChEBI" id="CHEBI:30413"/>
        <label>1</label>
    </ligand>
</feature>
<feature type="binding site" description="axial binding residue" evidence="1">
    <location>
        <position position="126"/>
    </location>
    <ligand>
        <name>heme</name>
        <dbReference type="ChEBI" id="CHEBI:30413"/>
        <label>1</label>
    </ligand>
    <ligandPart>
        <name>Fe</name>
        <dbReference type="ChEBI" id="CHEBI:18248"/>
    </ligandPart>
</feature>
<feature type="binding site" description="covalent" evidence="1">
    <location>
        <position position="160"/>
    </location>
    <ligand>
        <name>heme c</name>
        <dbReference type="ChEBI" id="CHEBI:61717"/>
        <label>2</label>
    </ligand>
</feature>
<feature type="binding site" description="covalent" evidence="1">
    <location>
        <position position="163"/>
    </location>
    <ligand>
        <name>heme c</name>
        <dbReference type="ChEBI" id="CHEBI:61717"/>
        <label>2</label>
    </ligand>
</feature>
<feature type="binding site" description="axial binding residue" evidence="1">
    <location>
        <position position="164"/>
    </location>
    <ligand>
        <name>heme c</name>
        <dbReference type="ChEBI" id="CHEBI:61717"/>
        <label>2</label>
    </ligand>
    <ligandPart>
        <name>Fe</name>
        <dbReference type="ChEBI" id="CHEBI:18248"/>
    </ligandPart>
</feature>
<feature type="binding site" description="covalent" evidence="1">
    <location>
        <position position="209"/>
    </location>
    <ligand>
        <name>heme c</name>
        <dbReference type="ChEBI" id="CHEBI:61717"/>
        <label>3</label>
    </ligand>
</feature>
<feature type="binding site" description="covalent" evidence="1">
    <location>
        <position position="212"/>
    </location>
    <ligand>
        <name>heme c</name>
        <dbReference type="ChEBI" id="CHEBI:61717"/>
        <label>3</label>
    </ligand>
</feature>
<feature type="binding site" description="axial binding residue" evidence="1">
    <location>
        <position position="213"/>
    </location>
    <ligand>
        <name>heme c</name>
        <dbReference type="ChEBI" id="CHEBI:61717"/>
        <label>3</label>
    </ligand>
    <ligandPart>
        <name>Fe</name>
        <dbReference type="ChEBI" id="CHEBI:18248"/>
    </ligandPart>
</feature>
<feature type="binding site" evidence="1">
    <location>
        <position position="215"/>
    </location>
    <ligand>
        <name>Ca(2+)</name>
        <dbReference type="ChEBI" id="CHEBI:29108"/>
    </ligand>
</feature>
<feature type="binding site" evidence="1">
    <location>
        <position position="216"/>
    </location>
    <ligand>
        <name>Ca(2+)</name>
        <dbReference type="ChEBI" id="CHEBI:29108"/>
    </ligand>
</feature>
<feature type="binding site" evidence="1">
    <location>
        <position position="216"/>
    </location>
    <ligand>
        <name>substrate</name>
    </ligand>
</feature>
<feature type="binding site" evidence="1">
    <location>
        <position position="261"/>
    </location>
    <ligand>
        <name>Ca(2+)</name>
        <dbReference type="ChEBI" id="CHEBI:29108"/>
    </ligand>
</feature>
<feature type="binding site" evidence="1">
    <location>
        <position position="263"/>
    </location>
    <ligand>
        <name>Ca(2+)</name>
        <dbReference type="ChEBI" id="CHEBI:29108"/>
    </ligand>
</feature>
<feature type="binding site" evidence="1">
    <location>
        <position position="264"/>
    </location>
    <ligand>
        <name>substrate</name>
    </ligand>
</feature>
<feature type="binding site" description="axial binding residue" evidence="1">
    <location>
        <position position="275"/>
    </location>
    <ligand>
        <name>heme c</name>
        <dbReference type="ChEBI" id="CHEBI:61717"/>
        <label>5</label>
    </ligand>
    <ligandPart>
        <name>Fe</name>
        <dbReference type="ChEBI" id="CHEBI:18248"/>
    </ligandPart>
</feature>
<feature type="binding site" description="covalent" evidence="1">
    <location>
        <position position="282"/>
    </location>
    <ligand>
        <name>heme c</name>
        <dbReference type="ChEBI" id="CHEBI:61717"/>
        <label>4</label>
    </ligand>
</feature>
<feature type="binding site" description="covalent" evidence="1">
    <location>
        <position position="285"/>
    </location>
    <ligand>
        <name>heme c</name>
        <dbReference type="ChEBI" id="CHEBI:61717"/>
        <label>4</label>
    </ligand>
</feature>
<feature type="binding site" description="axial binding residue" evidence="1">
    <location>
        <position position="286"/>
    </location>
    <ligand>
        <name>heme c</name>
        <dbReference type="ChEBI" id="CHEBI:61717"/>
        <label>4</label>
    </ligand>
    <ligandPart>
        <name>Fe</name>
        <dbReference type="ChEBI" id="CHEBI:18248"/>
    </ligandPart>
</feature>
<feature type="binding site" description="axial binding residue" evidence="1">
    <location>
        <position position="301"/>
    </location>
    <ligand>
        <name>heme c</name>
        <dbReference type="ChEBI" id="CHEBI:61717"/>
        <label>2</label>
    </ligand>
    <ligandPart>
        <name>Fe</name>
        <dbReference type="ChEBI" id="CHEBI:18248"/>
    </ligandPart>
</feature>
<feature type="binding site" description="covalent" evidence="1">
    <location>
        <position position="314"/>
    </location>
    <ligand>
        <name>heme c</name>
        <dbReference type="ChEBI" id="CHEBI:61717"/>
        <label>5</label>
    </ligand>
</feature>
<feature type="binding site" description="covalent" evidence="1">
    <location>
        <position position="317"/>
    </location>
    <ligand>
        <name>heme c</name>
        <dbReference type="ChEBI" id="CHEBI:61717"/>
        <label>5</label>
    </ligand>
</feature>
<feature type="binding site" description="axial binding residue" evidence="1">
    <location>
        <position position="318"/>
    </location>
    <ligand>
        <name>heme c</name>
        <dbReference type="ChEBI" id="CHEBI:61717"/>
        <label>5</label>
    </ligand>
    <ligandPart>
        <name>Fe</name>
        <dbReference type="ChEBI" id="CHEBI:18248"/>
    </ligandPart>
</feature>
<feature type="binding site" description="axial binding residue" evidence="1">
    <location>
        <position position="393"/>
    </location>
    <ligand>
        <name>heme c</name>
        <dbReference type="ChEBI" id="CHEBI:61717"/>
        <label>4</label>
    </ligand>
    <ligandPart>
        <name>Fe</name>
        <dbReference type="ChEBI" id="CHEBI:18248"/>
    </ligandPart>
</feature>
<name>NRFA_SHISS</name>
<keyword id="KW-0106">Calcium</keyword>
<keyword id="KW-0249">Electron transport</keyword>
<keyword id="KW-0349">Heme</keyword>
<keyword id="KW-0408">Iron</keyword>
<keyword id="KW-0479">Metal-binding</keyword>
<keyword id="KW-0560">Oxidoreductase</keyword>
<keyword id="KW-0574">Periplasm</keyword>
<keyword id="KW-1185">Reference proteome</keyword>
<keyword id="KW-0732">Signal</keyword>
<keyword id="KW-0813">Transport</keyword>
<protein>
    <recommendedName>
        <fullName evidence="1">Cytochrome c-552</fullName>
        <ecNumber evidence="1">1.7.2.2</ecNumber>
    </recommendedName>
    <alternativeName>
        <fullName evidence="1">Ammonia-forming cytochrome c nitrite reductase</fullName>
        <shortName evidence="1">Cytochrome c nitrite reductase</shortName>
    </alternativeName>
</protein>
<organism>
    <name type="scientific">Shigella sonnei (strain Ss046)</name>
    <dbReference type="NCBI Taxonomy" id="300269"/>
    <lineage>
        <taxon>Bacteria</taxon>
        <taxon>Pseudomonadati</taxon>
        <taxon>Pseudomonadota</taxon>
        <taxon>Gammaproteobacteria</taxon>
        <taxon>Enterobacterales</taxon>
        <taxon>Enterobacteriaceae</taxon>
        <taxon>Shigella</taxon>
    </lineage>
</organism>
<accession>Q3YUR5</accession>
<sequence length="478" mass="53703">MTRIKINARRIFSLLIPFFFFTSVHAEQTAAPAKPVTVEAKNETFAPQHPDQYLSWKATSEQSERVDALAEDPRLVILWAGYPFSRDYNKPRGHAFAVTDVRETLRTGAPKNAEDGPLPMACWSCKSPDVARLIQKDGEDGYFHGKWARGGPEIVNNLGCADCHNTASPEFAKGKPELTLSRPYAARAMEAIGKPFEKAGRFDQQSMVCGQCHVEYYFDGKNKAVKFPWDDGMKVENMEQYYDKIAFSDWTNSLSKTPMLKAQHPEYETWTAGIHGKNNVTCIDCHMPKVQNAEGKLYTDHKIGNPFDNFAQTCANCHTQDKAALQKVVAERKQSINDLKIKVEDQLVHAHFEAKAALDAGATEAEMKPIQDDIRHAQWRWDLAIASHGIHMHAPEEGLRMLGTAMDKAADARTKLARLLATKGITHEIQIPDISTKEKAQQAIGLNMEQIKAEKQDFIKTVIPQWEEQARKNGLLSQ</sequence>
<evidence type="ECO:0000255" key="1">
    <source>
        <dbReference type="HAMAP-Rule" id="MF_01182"/>
    </source>
</evidence>